<feature type="chain" id="PRO_1000191902" description="Aspartate carbamoyltransferase catalytic subunit">
    <location>
        <begin position="1"/>
        <end position="304"/>
    </location>
</feature>
<feature type="binding site" evidence="1">
    <location>
        <position position="49"/>
    </location>
    <ligand>
        <name>carbamoyl phosphate</name>
        <dbReference type="ChEBI" id="CHEBI:58228"/>
    </ligand>
</feature>
<feature type="binding site" evidence="1">
    <location>
        <position position="50"/>
    </location>
    <ligand>
        <name>carbamoyl phosphate</name>
        <dbReference type="ChEBI" id="CHEBI:58228"/>
    </ligand>
</feature>
<feature type="binding site" evidence="1">
    <location>
        <position position="77"/>
    </location>
    <ligand>
        <name>L-aspartate</name>
        <dbReference type="ChEBI" id="CHEBI:29991"/>
    </ligand>
</feature>
<feature type="binding site" evidence="1">
    <location>
        <position position="99"/>
    </location>
    <ligand>
        <name>carbamoyl phosphate</name>
        <dbReference type="ChEBI" id="CHEBI:58228"/>
    </ligand>
</feature>
<feature type="binding site" evidence="1">
    <location>
        <position position="127"/>
    </location>
    <ligand>
        <name>carbamoyl phosphate</name>
        <dbReference type="ChEBI" id="CHEBI:58228"/>
    </ligand>
</feature>
<feature type="binding site" evidence="1">
    <location>
        <position position="130"/>
    </location>
    <ligand>
        <name>carbamoyl phosphate</name>
        <dbReference type="ChEBI" id="CHEBI:58228"/>
    </ligand>
</feature>
<feature type="binding site" evidence="1">
    <location>
        <position position="160"/>
    </location>
    <ligand>
        <name>L-aspartate</name>
        <dbReference type="ChEBI" id="CHEBI:29991"/>
    </ligand>
</feature>
<feature type="binding site" evidence="1">
    <location>
        <position position="211"/>
    </location>
    <ligand>
        <name>L-aspartate</name>
        <dbReference type="ChEBI" id="CHEBI:29991"/>
    </ligand>
</feature>
<feature type="binding site" evidence="1">
    <location>
        <position position="252"/>
    </location>
    <ligand>
        <name>carbamoyl phosphate</name>
        <dbReference type="ChEBI" id="CHEBI:58228"/>
    </ligand>
</feature>
<feature type="binding site" evidence="1">
    <location>
        <position position="253"/>
    </location>
    <ligand>
        <name>carbamoyl phosphate</name>
        <dbReference type="ChEBI" id="CHEBI:58228"/>
    </ligand>
</feature>
<comment type="function">
    <text evidence="1">Catalyzes the condensation of carbamoyl phosphate and aspartate to form carbamoyl aspartate and inorganic phosphate, the committed step in the de novo pyrimidine nucleotide biosynthesis pathway.</text>
</comment>
<comment type="catalytic activity">
    <reaction evidence="1">
        <text>carbamoyl phosphate + L-aspartate = N-carbamoyl-L-aspartate + phosphate + H(+)</text>
        <dbReference type="Rhea" id="RHEA:20013"/>
        <dbReference type="ChEBI" id="CHEBI:15378"/>
        <dbReference type="ChEBI" id="CHEBI:29991"/>
        <dbReference type="ChEBI" id="CHEBI:32814"/>
        <dbReference type="ChEBI" id="CHEBI:43474"/>
        <dbReference type="ChEBI" id="CHEBI:58228"/>
        <dbReference type="EC" id="2.1.3.2"/>
    </reaction>
</comment>
<comment type="pathway">
    <text evidence="1">Pyrimidine metabolism; UMP biosynthesis via de novo pathway; (S)-dihydroorotate from bicarbonate: step 2/3.</text>
</comment>
<comment type="subunit">
    <text evidence="1">Heterododecamer (2C3:3R2) of six catalytic PyrB chains organized as two trimers (C3), and six regulatory PyrI chains organized as three dimers (R2).</text>
</comment>
<comment type="similarity">
    <text evidence="1">Belongs to the aspartate/ornithine carbamoyltransferase superfamily. ATCase family.</text>
</comment>
<name>PYRB_BACC2</name>
<keyword id="KW-0665">Pyrimidine biosynthesis</keyword>
<keyword id="KW-0808">Transferase</keyword>
<organism>
    <name type="scientific">Bacillus cereus (strain G9842)</name>
    <dbReference type="NCBI Taxonomy" id="405531"/>
    <lineage>
        <taxon>Bacteria</taxon>
        <taxon>Bacillati</taxon>
        <taxon>Bacillota</taxon>
        <taxon>Bacilli</taxon>
        <taxon>Bacillales</taxon>
        <taxon>Bacillaceae</taxon>
        <taxon>Bacillus</taxon>
        <taxon>Bacillus cereus group</taxon>
    </lineage>
</organism>
<evidence type="ECO:0000255" key="1">
    <source>
        <dbReference type="HAMAP-Rule" id="MF_00001"/>
    </source>
</evidence>
<protein>
    <recommendedName>
        <fullName evidence="1">Aspartate carbamoyltransferase catalytic subunit</fullName>
        <ecNumber evidence="1">2.1.3.2</ecNumber>
    </recommendedName>
    <alternativeName>
        <fullName evidence="1">Aspartate transcarbamylase</fullName>
        <shortName evidence="1">ATCase</shortName>
    </alternativeName>
</protein>
<accession>B7IUP9</accession>
<sequence length="304" mass="34675">MSHLLTMSELSEVEISEILKDAEDFANGKESKTTEQTFVANLFFENSTRTRFSFEVAEKRLGLDVLNFSADASSVQKGETLYDTIRTLESIGTKAVIVRHEQDRYFDELKDQVNIPILNAGDGCGNHPTQCLLDLLTIKQEFGRFEGLKIAIVGDVRHSRVARSNAEALTKLGATIYFASPEEWKDEDSTFGTYKPLDELVPEVDVMMLLRVQHERHDHYETDIMKEYHERHGLTVEREKRMKEGSIIMHPAPVNRDVEVASELVECERSRIFKQMENGVYVRMAVLKRALPNVLGGMKHELLV</sequence>
<gene>
    <name evidence="1" type="primary">pyrB</name>
    <name type="ordered locus">BCG9842_B1254</name>
</gene>
<dbReference type="EC" id="2.1.3.2" evidence="1"/>
<dbReference type="EMBL" id="CP001186">
    <property type="protein sequence ID" value="ACK95388.1"/>
    <property type="molecule type" value="Genomic_DNA"/>
</dbReference>
<dbReference type="RefSeq" id="WP_000018846.1">
    <property type="nucleotide sequence ID" value="NC_011772.1"/>
</dbReference>
<dbReference type="SMR" id="B7IUP9"/>
<dbReference type="KEGG" id="bcg:BCG9842_B1254"/>
<dbReference type="HOGENOM" id="CLU_043846_2_1_9"/>
<dbReference type="UniPathway" id="UPA00070">
    <property type="reaction ID" value="UER00116"/>
</dbReference>
<dbReference type="Proteomes" id="UP000006744">
    <property type="component" value="Chromosome"/>
</dbReference>
<dbReference type="GO" id="GO:0005829">
    <property type="term" value="C:cytosol"/>
    <property type="evidence" value="ECO:0007669"/>
    <property type="project" value="TreeGrafter"/>
</dbReference>
<dbReference type="GO" id="GO:0016597">
    <property type="term" value="F:amino acid binding"/>
    <property type="evidence" value="ECO:0007669"/>
    <property type="project" value="InterPro"/>
</dbReference>
<dbReference type="GO" id="GO:0004070">
    <property type="term" value="F:aspartate carbamoyltransferase activity"/>
    <property type="evidence" value="ECO:0007669"/>
    <property type="project" value="UniProtKB-UniRule"/>
</dbReference>
<dbReference type="GO" id="GO:0006207">
    <property type="term" value="P:'de novo' pyrimidine nucleobase biosynthetic process"/>
    <property type="evidence" value="ECO:0007669"/>
    <property type="project" value="InterPro"/>
</dbReference>
<dbReference type="GO" id="GO:0044205">
    <property type="term" value="P:'de novo' UMP biosynthetic process"/>
    <property type="evidence" value="ECO:0007669"/>
    <property type="project" value="UniProtKB-UniRule"/>
</dbReference>
<dbReference type="GO" id="GO:0006520">
    <property type="term" value="P:amino acid metabolic process"/>
    <property type="evidence" value="ECO:0007669"/>
    <property type="project" value="InterPro"/>
</dbReference>
<dbReference type="FunFam" id="3.40.50.1370:FF:000001">
    <property type="entry name" value="Aspartate carbamoyltransferase"/>
    <property type="match status" value="1"/>
</dbReference>
<dbReference type="FunFam" id="3.40.50.1370:FF:000011">
    <property type="entry name" value="Aspartate carbamoyltransferase"/>
    <property type="match status" value="1"/>
</dbReference>
<dbReference type="Gene3D" id="3.40.50.1370">
    <property type="entry name" value="Aspartate/ornithine carbamoyltransferase"/>
    <property type="match status" value="2"/>
</dbReference>
<dbReference type="HAMAP" id="MF_00001">
    <property type="entry name" value="Asp_carb_tr"/>
    <property type="match status" value="1"/>
</dbReference>
<dbReference type="InterPro" id="IPR006132">
    <property type="entry name" value="Asp/Orn_carbamoyltranf_P-bd"/>
</dbReference>
<dbReference type="InterPro" id="IPR006130">
    <property type="entry name" value="Asp/Orn_carbamoylTrfase"/>
</dbReference>
<dbReference type="InterPro" id="IPR036901">
    <property type="entry name" value="Asp/Orn_carbamoylTrfase_sf"/>
</dbReference>
<dbReference type="InterPro" id="IPR002082">
    <property type="entry name" value="Asp_carbamoyltransf"/>
</dbReference>
<dbReference type="InterPro" id="IPR006131">
    <property type="entry name" value="Asp_carbamoyltransf_Asp/Orn-bd"/>
</dbReference>
<dbReference type="NCBIfam" id="TIGR00670">
    <property type="entry name" value="asp_carb_tr"/>
    <property type="match status" value="1"/>
</dbReference>
<dbReference type="NCBIfam" id="NF002032">
    <property type="entry name" value="PRK00856.1"/>
    <property type="match status" value="1"/>
</dbReference>
<dbReference type="PANTHER" id="PTHR45753:SF6">
    <property type="entry name" value="ASPARTATE CARBAMOYLTRANSFERASE"/>
    <property type="match status" value="1"/>
</dbReference>
<dbReference type="PANTHER" id="PTHR45753">
    <property type="entry name" value="ORNITHINE CARBAMOYLTRANSFERASE, MITOCHONDRIAL"/>
    <property type="match status" value="1"/>
</dbReference>
<dbReference type="Pfam" id="PF00185">
    <property type="entry name" value="OTCace"/>
    <property type="match status" value="1"/>
</dbReference>
<dbReference type="Pfam" id="PF02729">
    <property type="entry name" value="OTCace_N"/>
    <property type="match status" value="1"/>
</dbReference>
<dbReference type="PRINTS" id="PR00100">
    <property type="entry name" value="AOTCASE"/>
</dbReference>
<dbReference type="PRINTS" id="PR00101">
    <property type="entry name" value="ATCASE"/>
</dbReference>
<dbReference type="SUPFAM" id="SSF53671">
    <property type="entry name" value="Aspartate/ornithine carbamoyltransferase"/>
    <property type="match status" value="1"/>
</dbReference>
<dbReference type="PROSITE" id="PS00097">
    <property type="entry name" value="CARBAMOYLTRANSFERASE"/>
    <property type="match status" value="1"/>
</dbReference>
<reference key="1">
    <citation type="submission" date="2008-10" db="EMBL/GenBank/DDBJ databases">
        <title>Genome sequence of Bacillus cereus G9842.</title>
        <authorList>
            <person name="Dodson R.J."/>
            <person name="Durkin A.S."/>
            <person name="Rosovitz M.J."/>
            <person name="Rasko D.A."/>
            <person name="Hoffmaster A."/>
            <person name="Ravel J."/>
            <person name="Sutton G."/>
        </authorList>
    </citation>
    <scope>NUCLEOTIDE SEQUENCE [LARGE SCALE GENOMIC DNA]</scope>
    <source>
        <strain>G9842</strain>
    </source>
</reference>
<proteinExistence type="inferred from homology"/>